<comment type="function">
    <text evidence="1">Component of the acetyl coenzyme A carboxylase (ACC) complex. Biotin carboxylase (BC) catalyzes the carboxylation of biotin on its carrier protein (BCCP) and then the CO(2) group is transferred by the transcarboxylase to acetyl-CoA to form malonyl-CoA.</text>
</comment>
<comment type="catalytic activity">
    <reaction evidence="1">
        <text>N(6)-carboxybiotinyl-L-lysyl-[protein] + acetyl-CoA = N(6)-biotinyl-L-lysyl-[protein] + malonyl-CoA</text>
        <dbReference type="Rhea" id="RHEA:54728"/>
        <dbReference type="Rhea" id="RHEA-COMP:10505"/>
        <dbReference type="Rhea" id="RHEA-COMP:10506"/>
        <dbReference type="ChEBI" id="CHEBI:57288"/>
        <dbReference type="ChEBI" id="CHEBI:57384"/>
        <dbReference type="ChEBI" id="CHEBI:83144"/>
        <dbReference type="ChEBI" id="CHEBI:83145"/>
        <dbReference type="EC" id="2.1.3.15"/>
    </reaction>
</comment>
<comment type="cofactor">
    <cofactor evidence="1">
        <name>Zn(2+)</name>
        <dbReference type="ChEBI" id="CHEBI:29105"/>
    </cofactor>
    <text evidence="1">Binds 1 zinc ion per subunit.</text>
</comment>
<comment type="pathway">
    <text evidence="1">Lipid metabolism; malonyl-CoA biosynthesis; malonyl-CoA from acetyl-CoA: step 1/1.</text>
</comment>
<comment type="subunit">
    <text evidence="1">Acetyl-CoA carboxylase is a heterohexamer composed of biotin carboxyl carrier protein (AccB), biotin carboxylase (AccC) and two subunits each of ACCase subunit alpha (AccA) and ACCase subunit beta (AccD).</text>
</comment>
<comment type="subcellular location">
    <subcellularLocation>
        <location evidence="1">Cytoplasm</location>
    </subcellularLocation>
</comment>
<comment type="similarity">
    <text evidence="1">Belongs to the AccD/PCCB family.</text>
</comment>
<gene>
    <name evidence="1" type="primary">accD</name>
    <name type="ordered locus">Paes_1839</name>
</gene>
<protein>
    <recommendedName>
        <fullName evidence="1">Acetyl-coenzyme A carboxylase carboxyl transferase subunit beta</fullName>
        <shortName evidence="1">ACCase subunit beta</shortName>
        <shortName evidence="1">Acetyl-CoA carboxylase carboxyltransferase subunit beta</shortName>
        <ecNumber evidence="1">2.1.3.15</ecNumber>
    </recommendedName>
</protein>
<keyword id="KW-0067">ATP-binding</keyword>
<keyword id="KW-0963">Cytoplasm</keyword>
<keyword id="KW-0275">Fatty acid biosynthesis</keyword>
<keyword id="KW-0276">Fatty acid metabolism</keyword>
<keyword id="KW-0444">Lipid biosynthesis</keyword>
<keyword id="KW-0443">Lipid metabolism</keyword>
<keyword id="KW-0479">Metal-binding</keyword>
<keyword id="KW-0547">Nucleotide-binding</keyword>
<keyword id="KW-0808">Transferase</keyword>
<keyword id="KW-0862">Zinc</keyword>
<keyword id="KW-0863">Zinc-finger</keyword>
<evidence type="ECO:0000255" key="1">
    <source>
        <dbReference type="HAMAP-Rule" id="MF_01395"/>
    </source>
</evidence>
<evidence type="ECO:0000255" key="2">
    <source>
        <dbReference type="PROSITE-ProRule" id="PRU01136"/>
    </source>
</evidence>
<reference key="1">
    <citation type="submission" date="2008-06" db="EMBL/GenBank/DDBJ databases">
        <title>Complete sequence of chromosome of Prosthecochloris aestuarii DSM 271.</title>
        <authorList>
            <consortium name="US DOE Joint Genome Institute"/>
            <person name="Lucas S."/>
            <person name="Copeland A."/>
            <person name="Lapidus A."/>
            <person name="Glavina del Rio T."/>
            <person name="Dalin E."/>
            <person name="Tice H."/>
            <person name="Bruce D."/>
            <person name="Goodwin L."/>
            <person name="Pitluck S."/>
            <person name="Schmutz J."/>
            <person name="Larimer F."/>
            <person name="Land M."/>
            <person name="Hauser L."/>
            <person name="Kyrpides N."/>
            <person name="Anderson I."/>
            <person name="Liu Z."/>
            <person name="Li T."/>
            <person name="Zhao F."/>
            <person name="Overmann J."/>
            <person name="Bryant D.A."/>
            <person name="Richardson P."/>
        </authorList>
    </citation>
    <scope>NUCLEOTIDE SEQUENCE [LARGE SCALE GENOMIC DNA]</scope>
    <source>
        <strain>DSM 271 / SK 413</strain>
    </source>
</reference>
<dbReference type="EC" id="2.1.3.15" evidence="1"/>
<dbReference type="EMBL" id="CP001108">
    <property type="protein sequence ID" value="ACF46851.1"/>
    <property type="molecule type" value="Genomic_DNA"/>
</dbReference>
<dbReference type="RefSeq" id="WP_012506384.1">
    <property type="nucleotide sequence ID" value="NC_011059.1"/>
</dbReference>
<dbReference type="SMR" id="B4S459"/>
<dbReference type="STRING" id="290512.Paes_1839"/>
<dbReference type="KEGG" id="paa:Paes_1839"/>
<dbReference type="eggNOG" id="COG0777">
    <property type="taxonomic scope" value="Bacteria"/>
</dbReference>
<dbReference type="HOGENOM" id="CLU_015486_1_0_10"/>
<dbReference type="UniPathway" id="UPA00655">
    <property type="reaction ID" value="UER00711"/>
</dbReference>
<dbReference type="Proteomes" id="UP000002725">
    <property type="component" value="Chromosome"/>
</dbReference>
<dbReference type="GO" id="GO:0009317">
    <property type="term" value="C:acetyl-CoA carboxylase complex"/>
    <property type="evidence" value="ECO:0007669"/>
    <property type="project" value="InterPro"/>
</dbReference>
<dbReference type="GO" id="GO:0003989">
    <property type="term" value="F:acetyl-CoA carboxylase activity"/>
    <property type="evidence" value="ECO:0007669"/>
    <property type="project" value="InterPro"/>
</dbReference>
<dbReference type="GO" id="GO:0005524">
    <property type="term" value="F:ATP binding"/>
    <property type="evidence" value="ECO:0007669"/>
    <property type="project" value="UniProtKB-KW"/>
</dbReference>
<dbReference type="GO" id="GO:0016743">
    <property type="term" value="F:carboxyl- or carbamoyltransferase activity"/>
    <property type="evidence" value="ECO:0007669"/>
    <property type="project" value="UniProtKB-UniRule"/>
</dbReference>
<dbReference type="GO" id="GO:0008270">
    <property type="term" value="F:zinc ion binding"/>
    <property type="evidence" value="ECO:0007669"/>
    <property type="project" value="UniProtKB-UniRule"/>
</dbReference>
<dbReference type="GO" id="GO:0006633">
    <property type="term" value="P:fatty acid biosynthetic process"/>
    <property type="evidence" value="ECO:0007669"/>
    <property type="project" value="UniProtKB-KW"/>
</dbReference>
<dbReference type="GO" id="GO:2001295">
    <property type="term" value="P:malonyl-CoA biosynthetic process"/>
    <property type="evidence" value="ECO:0007669"/>
    <property type="project" value="UniProtKB-UniRule"/>
</dbReference>
<dbReference type="Gene3D" id="3.90.226.10">
    <property type="entry name" value="2-enoyl-CoA Hydratase, Chain A, domain 1"/>
    <property type="match status" value="1"/>
</dbReference>
<dbReference type="HAMAP" id="MF_01395">
    <property type="entry name" value="AcetylCoA_CT_beta"/>
    <property type="match status" value="1"/>
</dbReference>
<dbReference type="InterPro" id="IPR034733">
    <property type="entry name" value="AcCoA_carboxyl_beta"/>
</dbReference>
<dbReference type="InterPro" id="IPR000438">
    <property type="entry name" value="Acetyl_CoA_COase_Trfase_b_su"/>
</dbReference>
<dbReference type="InterPro" id="IPR029045">
    <property type="entry name" value="ClpP/crotonase-like_dom_sf"/>
</dbReference>
<dbReference type="InterPro" id="IPR011762">
    <property type="entry name" value="COA_CT_N"/>
</dbReference>
<dbReference type="InterPro" id="IPR041010">
    <property type="entry name" value="Znf-ACC"/>
</dbReference>
<dbReference type="NCBIfam" id="TIGR00515">
    <property type="entry name" value="accD"/>
    <property type="match status" value="1"/>
</dbReference>
<dbReference type="PANTHER" id="PTHR42995">
    <property type="entry name" value="ACETYL-COENZYME A CARBOXYLASE CARBOXYL TRANSFERASE SUBUNIT BETA, CHLOROPLASTIC"/>
    <property type="match status" value="1"/>
</dbReference>
<dbReference type="PANTHER" id="PTHR42995:SF5">
    <property type="entry name" value="ACETYL-COENZYME A CARBOXYLASE CARBOXYL TRANSFERASE SUBUNIT BETA, CHLOROPLASTIC"/>
    <property type="match status" value="1"/>
</dbReference>
<dbReference type="Pfam" id="PF01039">
    <property type="entry name" value="Carboxyl_trans"/>
    <property type="match status" value="1"/>
</dbReference>
<dbReference type="Pfam" id="PF17848">
    <property type="entry name" value="Zn_ribbon_ACC"/>
    <property type="match status" value="1"/>
</dbReference>
<dbReference type="PRINTS" id="PR01070">
    <property type="entry name" value="ACCCTRFRASEB"/>
</dbReference>
<dbReference type="SUPFAM" id="SSF52096">
    <property type="entry name" value="ClpP/crotonase"/>
    <property type="match status" value="1"/>
</dbReference>
<dbReference type="PROSITE" id="PS50980">
    <property type="entry name" value="COA_CT_NTER"/>
    <property type="match status" value="1"/>
</dbReference>
<sequence length="279" mass="31421">MVWFKRAKPSIFTKDKRDMPEGLWWKCESCGAMLHKKQVEDHFYTCCECGYHFRLSPYQYFSLLFDEKKYDEFDDNLRAADPLHFSDTRKYPDRVHDILEKTGKTEACRNAIGRVSGHDLVISAMDFGFIGGSMGSVVGEKISRAVSKSIEHNAPLLIISQSGGARMMEGAFSLMQMAKTSARLSQLSARGIPYISLMTNPTMGGTSASYAMLGDINISEPKALIGFAGPRVIRDTIKRDLPEGFQRAEFLLEHGFLDCIVHRRDLKHRLSQILGHLSS</sequence>
<accession>B4S459</accession>
<organism>
    <name type="scientific">Prosthecochloris aestuarii (strain DSM 271 / SK 413)</name>
    <dbReference type="NCBI Taxonomy" id="290512"/>
    <lineage>
        <taxon>Bacteria</taxon>
        <taxon>Pseudomonadati</taxon>
        <taxon>Chlorobiota</taxon>
        <taxon>Chlorobiia</taxon>
        <taxon>Chlorobiales</taxon>
        <taxon>Chlorobiaceae</taxon>
        <taxon>Prosthecochloris</taxon>
    </lineage>
</organism>
<proteinExistence type="inferred from homology"/>
<name>ACCD_PROA2</name>
<feature type="chain" id="PRO_0000389819" description="Acetyl-coenzyme A carboxylase carboxyl transferase subunit beta">
    <location>
        <begin position="1"/>
        <end position="279"/>
    </location>
</feature>
<feature type="domain" description="CoA carboxyltransferase N-terminal" evidence="2">
    <location>
        <begin position="23"/>
        <end position="279"/>
    </location>
</feature>
<feature type="zinc finger region" description="C4-type" evidence="1">
    <location>
        <begin position="27"/>
        <end position="49"/>
    </location>
</feature>
<feature type="binding site" evidence="1">
    <location>
        <position position="27"/>
    </location>
    <ligand>
        <name>Zn(2+)</name>
        <dbReference type="ChEBI" id="CHEBI:29105"/>
    </ligand>
</feature>
<feature type="binding site" evidence="1">
    <location>
        <position position="30"/>
    </location>
    <ligand>
        <name>Zn(2+)</name>
        <dbReference type="ChEBI" id="CHEBI:29105"/>
    </ligand>
</feature>
<feature type="binding site" evidence="1">
    <location>
        <position position="46"/>
    </location>
    <ligand>
        <name>Zn(2+)</name>
        <dbReference type="ChEBI" id="CHEBI:29105"/>
    </ligand>
</feature>
<feature type="binding site" evidence="1">
    <location>
        <position position="49"/>
    </location>
    <ligand>
        <name>Zn(2+)</name>
        <dbReference type="ChEBI" id="CHEBI:29105"/>
    </ligand>
</feature>